<reference key="1">
    <citation type="journal article" date="2004" name="Proc. Natl. Acad. Sci. U.S.A.">
        <title>Complete genomes of two clinical Staphylococcus aureus strains: evidence for the rapid evolution of virulence and drug resistance.</title>
        <authorList>
            <person name="Holden M.T.G."/>
            <person name="Feil E.J."/>
            <person name="Lindsay J.A."/>
            <person name="Peacock S.J."/>
            <person name="Day N.P.J."/>
            <person name="Enright M.C."/>
            <person name="Foster T.J."/>
            <person name="Moore C.E."/>
            <person name="Hurst L."/>
            <person name="Atkin R."/>
            <person name="Barron A."/>
            <person name="Bason N."/>
            <person name="Bentley S.D."/>
            <person name="Chillingworth C."/>
            <person name="Chillingworth T."/>
            <person name="Churcher C."/>
            <person name="Clark L."/>
            <person name="Corton C."/>
            <person name="Cronin A."/>
            <person name="Doggett J."/>
            <person name="Dowd L."/>
            <person name="Feltwell T."/>
            <person name="Hance Z."/>
            <person name="Harris B."/>
            <person name="Hauser H."/>
            <person name="Holroyd S."/>
            <person name="Jagels K."/>
            <person name="James K.D."/>
            <person name="Lennard N."/>
            <person name="Line A."/>
            <person name="Mayes R."/>
            <person name="Moule S."/>
            <person name="Mungall K."/>
            <person name="Ormond D."/>
            <person name="Quail M.A."/>
            <person name="Rabbinowitsch E."/>
            <person name="Rutherford K.M."/>
            <person name="Sanders M."/>
            <person name="Sharp S."/>
            <person name="Simmonds M."/>
            <person name="Stevens K."/>
            <person name="Whitehead S."/>
            <person name="Barrell B.G."/>
            <person name="Spratt B.G."/>
            <person name="Parkhill J."/>
        </authorList>
    </citation>
    <scope>NUCLEOTIDE SEQUENCE [LARGE SCALE GENOMIC DNA]</scope>
    <source>
        <strain>MSSA476</strain>
    </source>
</reference>
<sequence>MKDVKALKLMTLNDVLSQINGDMTLGIGTGSTMELLLPQMAQLIKERGYNITGVCTSNKIAFLAKELGIKICEINDVDHIDLAIDGADEVDPSLNIIKGGGGALFREKVIDEMASRFVVVVDETKIVQYLGETFKLPVEVDKFNWYHILRKIESYADIKVERRVNEDVAFITDNGNYILDCKLPKGIDPYKFHEYLIHLTGVFETGYFLDMADQVIVGTQEGVKILEK</sequence>
<organism>
    <name type="scientific">Staphylococcus aureus (strain MSSA476)</name>
    <dbReference type="NCBI Taxonomy" id="282459"/>
    <lineage>
        <taxon>Bacteria</taxon>
        <taxon>Bacillati</taxon>
        <taxon>Bacillota</taxon>
        <taxon>Bacilli</taxon>
        <taxon>Bacillales</taxon>
        <taxon>Staphylococcaceae</taxon>
        <taxon>Staphylococcus</taxon>
    </lineage>
</organism>
<dbReference type="EC" id="5.3.1.6" evidence="1"/>
<dbReference type="EMBL" id="BX571857">
    <property type="protein sequence ID" value="CAG44039.1"/>
    <property type="molecule type" value="Genomic_DNA"/>
</dbReference>
<dbReference type="RefSeq" id="WP_000655864.1">
    <property type="nucleotide sequence ID" value="NC_002953.3"/>
</dbReference>
<dbReference type="SMR" id="Q6G6Y5"/>
<dbReference type="KEGG" id="sas:SAS2228"/>
<dbReference type="HOGENOM" id="CLU_056590_1_0_9"/>
<dbReference type="UniPathway" id="UPA00115">
    <property type="reaction ID" value="UER00412"/>
</dbReference>
<dbReference type="GO" id="GO:0005829">
    <property type="term" value="C:cytosol"/>
    <property type="evidence" value="ECO:0007669"/>
    <property type="project" value="TreeGrafter"/>
</dbReference>
<dbReference type="GO" id="GO:0004751">
    <property type="term" value="F:ribose-5-phosphate isomerase activity"/>
    <property type="evidence" value="ECO:0007669"/>
    <property type="project" value="UniProtKB-UniRule"/>
</dbReference>
<dbReference type="GO" id="GO:0006014">
    <property type="term" value="P:D-ribose metabolic process"/>
    <property type="evidence" value="ECO:0007669"/>
    <property type="project" value="TreeGrafter"/>
</dbReference>
<dbReference type="GO" id="GO:0009052">
    <property type="term" value="P:pentose-phosphate shunt, non-oxidative branch"/>
    <property type="evidence" value="ECO:0007669"/>
    <property type="project" value="UniProtKB-UniRule"/>
</dbReference>
<dbReference type="CDD" id="cd01398">
    <property type="entry name" value="RPI_A"/>
    <property type="match status" value="1"/>
</dbReference>
<dbReference type="FunFam" id="3.40.50.1360:FF:000001">
    <property type="entry name" value="Ribose-5-phosphate isomerase A"/>
    <property type="match status" value="1"/>
</dbReference>
<dbReference type="Gene3D" id="3.30.70.260">
    <property type="match status" value="1"/>
</dbReference>
<dbReference type="Gene3D" id="3.40.50.1360">
    <property type="match status" value="1"/>
</dbReference>
<dbReference type="HAMAP" id="MF_00170">
    <property type="entry name" value="Rib_5P_isom_A"/>
    <property type="match status" value="1"/>
</dbReference>
<dbReference type="InterPro" id="IPR037171">
    <property type="entry name" value="NagB/RpiA_transferase-like"/>
</dbReference>
<dbReference type="InterPro" id="IPR020672">
    <property type="entry name" value="Ribose5P_isomerase_typA_subgr"/>
</dbReference>
<dbReference type="InterPro" id="IPR004788">
    <property type="entry name" value="Ribose5P_isomerase_type_A"/>
</dbReference>
<dbReference type="NCBIfam" id="NF001924">
    <property type="entry name" value="PRK00702.1"/>
    <property type="match status" value="1"/>
</dbReference>
<dbReference type="NCBIfam" id="NF010585">
    <property type="entry name" value="PRK13978.1"/>
    <property type="match status" value="1"/>
</dbReference>
<dbReference type="NCBIfam" id="TIGR00021">
    <property type="entry name" value="rpiA"/>
    <property type="match status" value="1"/>
</dbReference>
<dbReference type="PANTHER" id="PTHR11934">
    <property type="entry name" value="RIBOSE-5-PHOSPHATE ISOMERASE"/>
    <property type="match status" value="1"/>
</dbReference>
<dbReference type="PANTHER" id="PTHR11934:SF0">
    <property type="entry name" value="RIBOSE-5-PHOSPHATE ISOMERASE"/>
    <property type="match status" value="1"/>
</dbReference>
<dbReference type="Pfam" id="PF06026">
    <property type="entry name" value="Rib_5-P_isom_A"/>
    <property type="match status" value="1"/>
</dbReference>
<dbReference type="SUPFAM" id="SSF75445">
    <property type="entry name" value="D-ribose-5-phosphate isomerase (RpiA), lid domain"/>
    <property type="match status" value="1"/>
</dbReference>
<dbReference type="SUPFAM" id="SSF100950">
    <property type="entry name" value="NagB/RpiA/CoA transferase-like"/>
    <property type="match status" value="1"/>
</dbReference>
<evidence type="ECO:0000255" key="1">
    <source>
        <dbReference type="HAMAP-Rule" id="MF_00170"/>
    </source>
</evidence>
<gene>
    <name evidence="1" type="primary">rpiA</name>
    <name type="ordered locus">SAS2228</name>
</gene>
<comment type="function">
    <text evidence="1">Catalyzes the reversible conversion of ribose-5-phosphate to ribulose 5-phosphate.</text>
</comment>
<comment type="catalytic activity">
    <reaction evidence="1">
        <text>aldehydo-D-ribose 5-phosphate = D-ribulose 5-phosphate</text>
        <dbReference type="Rhea" id="RHEA:14657"/>
        <dbReference type="ChEBI" id="CHEBI:58121"/>
        <dbReference type="ChEBI" id="CHEBI:58273"/>
        <dbReference type="EC" id="5.3.1.6"/>
    </reaction>
</comment>
<comment type="pathway">
    <text evidence="1">Carbohydrate degradation; pentose phosphate pathway; D-ribose 5-phosphate from D-ribulose 5-phosphate (non-oxidative stage): step 1/1.</text>
</comment>
<comment type="subunit">
    <text evidence="1">Homodimer.</text>
</comment>
<comment type="similarity">
    <text evidence="1">Belongs to the ribose 5-phosphate isomerase family.</text>
</comment>
<feature type="chain" id="PRO_0000158467" description="Ribose-5-phosphate isomerase A">
    <location>
        <begin position="1"/>
        <end position="228"/>
    </location>
</feature>
<feature type="active site" description="Proton acceptor" evidence="1">
    <location>
        <position position="107"/>
    </location>
</feature>
<feature type="binding site" evidence="1">
    <location>
        <begin position="29"/>
        <end position="32"/>
    </location>
    <ligand>
        <name>substrate</name>
    </ligand>
</feature>
<feature type="binding site" evidence="1">
    <location>
        <begin position="85"/>
        <end position="88"/>
    </location>
    <ligand>
        <name>substrate</name>
    </ligand>
</feature>
<feature type="binding site" evidence="1">
    <location>
        <begin position="98"/>
        <end position="101"/>
    </location>
    <ligand>
        <name>substrate</name>
    </ligand>
</feature>
<feature type="binding site" evidence="1">
    <location>
        <position position="125"/>
    </location>
    <ligand>
        <name>substrate</name>
    </ligand>
</feature>
<protein>
    <recommendedName>
        <fullName evidence="1">Ribose-5-phosphate isomerase A</fullName>
        <ecNumber evidence="1">5.3.1.6</ecNumber>
    </recommendedName>
    <alternativeName>
        <fullName evidence="1">Phosphoriboisomerase A</fullName>
        <shortName evidence="1">PRI</shortName>
    </alternativeName>
</protein>
<keyword id="KW-0413">Isomerase</keyword>
<accession>Q6G6Y5</accession>
<proteinExistence type="inferred from homology"/>
<name>RPIA_STAAS</name>